<dbReference type="EC" id="2.4.2.18" evidence="1"/>
<dbReference type="EMBL" id="CP000682">
    <property type="protein sequence ID" value="ABP95844.1"/>
    <property type="molecule type" value="Genomic_DNA"/>
</dbReference>
<dbReference type="RefSeq" id="WP_012021631.1">
    <property type="nucleotide sequence ID" value="NC_009440.1"/>
</dbReference>
<dbReference type="SMR" id="A4YHE2"/>
<dbReference type="STRING" id="399549.Msed_1689"/>
<dbReference type="GeneID" id="91756200"/>
<dbReference type="KEGG" id="mse:Msed_1689"/>
<dbReference type="eggNOG" id="arCOG02012">
    <property type="taxonomic scope" value="Archaea"/>
</dbReference>
<dbReference type="HOGENOM" id="CLU_034315_2_1_2"/>
<dbReference type="UniPathway" id="UPA00035">
    <property type="reaction ID" value="UER00041"/>
</dbReference>
<dbReference type="Proteomes" id="UP000000242">
    <property type="component" value="Chromosome"/>
</dbReference>
<dbReference type="GO" id="GO:0005829">
    <property type="term" value="C:cytosol"/>
    <property type="evidence" value="ECO:0007669"/>
    <property type="project" value="TreeGrafter"/>
</dbReference>
<dbReference type="GO" id="GO:0004048">
    <property type="term" value="F:anthranilate phosphoribosyltransferase activity"/>
    <property type="evidence" value="ECO:0007669"/>
    <property type="project" value="UniProtKB-UniRule"/>
</dbReference>
<dbReference type="GO" id="GO:0000287">
    <property type="term" value="F:magnesium ion binding"/>
    <property type="evidence" value="ECO:0007669"/>
    <property type="project" value="UniProtKB-UniRule"/>
</dbReference>
<dbReference type="GO" id="GO:0000162">
    <property type="term" value="P:L-tryptophan biosynthetic process"/>
    <property type="evidence" value="ECO:0007669"/>
    <property type="project" value="UniProtKB-UniRule"/>
</dbReference>
<dbReference type="Gene3D" id="3.40.1030.10">
    <property type="entry name" value="Nucleoside phosphorylase/phosphoribosyltransferase catalytic domain"/>
    <property type="match status" value="1"/>
</dbReference>
<dbReference type="Gene3D" id="1.20.970.10">
    <property type="entry name" value="Transferase, Pyrimidine Nucleoside Phosphorylase, Chain C"/>
    <property type="match status" value="1"/>
</dbReference>
<dbReference type="HAMAP" id="MF_00211">
    <property type="entry name" value="TrpD"/>
    <property type="match status" value="1"/>
</dbReference>
<dbReference type="InterPro" id="IPR005940">
    <property type="entry name" value="Anthranilate_Pribosyl_Tfrase"/>
</dbReference>
<dbReference type="InterPro" id="IPR000312">
    <property type="entry name" value="Glycosyl_Trfase_fam3"/>
</dbReference>
<dbReference type="InterPro" id="IPR017459">
    <property type="entry name" value="Glycosyl_Trfase_fam3_N_dom"/>
</dbReference>
<dbReference type="InterPro" id="IPR036320">
    <property type="entry name" value="Glycosyl_Trfase_fam3_N_dom_sf"/>
</dbReference>
<dbReference type="InterPro" id="IPR035902">
    <property type="entry name" value="Nuc_phospho_transferase"/>
</dbReference>
<dbReference type="NCBIfam" id="TIGR01245">
    <property type="entry name" value="trpD"/>
    <property type="match status" value="1"/>
</dbReference>
<dbReference type="PANTHER" id="PTHR43285">
    <property type="entry name" value="ANTHRANILATE PHOSPHORIBOSYLTRANSFERASE"/>
    <property type="match status" value="1"/>
</dbReference>
<dbReference type="PANTHER" id="PTHR43285:SF2">
    <property type="entry name" value="ANTHRANILATE PHOSPHORIBOSYLTRANSFERASE"/>
    <property type="match status" value="1"/>
</dbReference>
<dbReference type="Pfam" id="PF02885">
    <property type="entry name" value="Glycos_trans_3N"/>
    <property type="match status" value="1"/>
</dbReference>
<dbReference type="Pfam" id="PF00591">
    <property type="entry name" value="Glycos_transf_3"/>
    <property type="match status" value="1"/>
</dbReference>
<dbReference type="SUPFAM" id="SSF52418">
    <property type="entry name" value="Nucleoside phosphorylase/phosphoribosyltransferase catalytic domain"/>
    <property type="match status" value="1"/>
</dbReference>
<dbReference type="SUPFAM" id="SSF47648">
    <property type="entry name" value="Nucleoside phosphorylase/phosphoribosyltransferase N-terminal domain"/>
    <property type="match status" value="1"/>
</dbReference>
<evidence type="ECO:0000255" key="1">
    <source>
        <dbReference type="HAMAP-Rule" id="MF_00211"/>
    </source>
</evidence>
<comment type="function">
    <text evidence="1">Catalyzes the transfer of the phosphoribosyl group of 5-phosphorylribose-1-pyrophosphate (PRPP) to anthranilate to yield N-(5'-phosphoribosyl)-anthranilate (PRA).</text>
</comment>
<comment type="catalytic activity">
    <reaction evidence="1">
        <text>N-(5-phospho-beta-D-ribosyl)anthranilate + diphosphate = 5-phospho-alpha-D-ribose 1-diphosphate + anthranilate</text>
        <dbReference type="Rhea" id="RHEA:11768"/>
        <dbReference type="ChEBI" id="CHEBI:16567"/>
        <dbReference type="ChEBI" id="CHEBI:18277"/>
        <dbReference type="ChEBI" id="CHEBI:33019"/>
        <dbReference type="ChEBI" id="CHEBI:58017"/>
        <dbReference type="EC" id="2.4.2.18"/>
    </reaction>
</comment>
<comment type="cofactor">
    <cofactor evidence="1">
        <name>Mg(2+)</name>
        <dbReference type="ChEBI" id="CHEBI:18420"/>
    </cofactor>
    <text evidence="1">Binds 2 magnesium ions per monomer.</text>
</comment>
<comment type="pathway">
    <text evidence="1">Amino-acid biosynthesis; L-tryptophan biosynthesis; L-tryptophan from chorismate: step 2/5.</text>
</comment>
<comment type="subunit">
    <text evidence="1">Homodimer.</text>
</comment>
<comment type="similarity">
    <text evidence="1">Belongs to the anthranilate phosphoribosyltransferase family.</text>
</comment>
<feature type="chain" id="PRO_1000071744" description="Anthranilate phosphoribosyltransferase">
    <location>
        <begin position="1"/>
        <end position="343"/>
    </location>
</feature>
<feature type="binding site" evidence="1">
    <location>
        <position position="79"/>
    </location>
    <ligand>
        <name>5-phospho-alpha-D-ribose 1-diphosphate</name>
        <dbReference type="ChEBI" id="CHEBI:58017"/>
    </ligand>
</feature>
<feature type="binding site" evidence="1">
    <location>
        <position position="79"/>
    </location>
    <ligand>
        <name>anthranilate</name>
        <dbReference type="ChEBI" id="CHEBI:16567"/>
        <label>1</label>
    </ligand>
</feature>
<feature type="binding site" evidence="1">
    <location>
        <begin position="82"/>
        <end position="83"/>
    </location>
    <ligand>
        <name>5-phospho-alpha-D-ribose 1-diphosphate</name>
        <dbReference type="ChEBI" id="CHEBI:58017"/>
    </ligand>
</feature>
<feature type="binding site" evidence="1">
    <location>
        <position position="87"/>
    </location>
    <ligand>
        <name>5-phospho-alpha-D-ribose 1-diphosphate</name>
        <dbReference type="ChEBI" id="CHEBI:58017"/>
    </ligand>
</feature>
<feature type="binding site" evidence="1">
    <location>
        <begin position="89"/>
        <end position="92"/>
    </location>
    <ligand>
        <name>5-phospho-alpha-D-ribose 1-diphosphate</name>
        <dbReference type="ChEBI" id="CHEBI:58017"/>
    </ligand>
</feature>
<feature type="binding site" evidence="1">
    <location>
        <position position="91"/>
    </location>
    <ligand>
        <name>Mg(2+)</name>
        <dbReference type="ChEBI" id="CHEBI:18420"/>
        <label>1</label>
    </ligand>
</feature>
<feature type="binding site" evidence="1">
    <location>
        <begin position="106"/>
        <end position="114"/>
    </location>
    <ligand>
        <name>5-phospho-alpha-D-ribose 1-diphosphate</name>
        <dbReference type="ChEBI" id="CHEBI:58017"/>
    </ligand>
</feature>
<feature type="binding site" evidence="1">
    <location>
        <position position="109"/>
    </location>
    <ligand>
        <name>anthranilate</name>
        <dbReference type="ChEBI" id="CHEBI:16567"/>
        <label>1</label>
    </ligand>
</feature>
<feature type="binding site" evidence="1">
    <location>
        <position position="118"/>
    </location>
    <ligand>
        <name>5-phospho-alpha-D-ribose 1-diphosphate</name>
        <dbReference type="ChEBI" id="CHEBI:58017"/>
    </ligand>
</feature>
<feature type="binding site" evidence="1">
    <location>
        <position position="164"/>
    </location>
    <ligand>
        <name>anthranilate</name>
        <dbReference type="ChEBI" id="CHEBI:16567"/>
        <label>2</label>
    </ligand>
</feature>
<feature type="binding site" evidence="1">
    <location>
        <position position="223"/>
    </location>
    <ligand>
        <name>Mg(2+)</name>
        <dbReference type="ChEBI" id="CHEBI:18420"/>
        <label>2</label>
    </ligand>
</feature>
<feature type="binding site" evidence="1">
    <location>
        <position position="224"/>
    </location>
    <ligand>
        <name>Mg(2+)</name>
        <dbReference type="ChEBI" id="CHEBI:18420"/>
        <label>1</label>
    </ligand>
</feature>
<feature type="binding site" evidence="1">
    <location>
        <position position="224"/>
    </location>
    <ligand>
        <name>Mg(2+)</name>
        <dbReference type="ChEBI" id="CHEBI:18420"/>
        <label>2</label>
    </ligand>
</feature>
<gene>
    <name evidence="1" type="primary">trpD</name>
    <name type="ordered locus">Msed_1689</name>
</gene>
<name>TRPD_METS5</name>
<organism>
    <name type="scientific">Metallosphaera sedula (strain ATCC 51363 / DSM 5348 / JCM 9185 / NBRC 15509 / TH2)</name>
    <dbReference type="NCBI Taxonomy" id="399549"/>
    <lineage>
        <taxon>Archaea</taxon>
        <taxon>Thermoproteota</taxon>
        <taxon>Thermoprotei</taxon>
        <taxon>Sulfolobales</taxon>
        <taxon>Sulfolobaceae</taxon>
        <taxon>Metallosphaera</taxon>
    </lineage>
</organism>
<reference key="1">
    <citation type="journal article" date="2008" name="Appl. Environ. Microbiol.">
        <title>The genome sequence of the metal-mobilizing, extremely thermoacidophilic archaeon Metallosphaera sedula provides insights into bioleaching-associated metabolism.</title>
        <authorList>
            <person name="Auernik K.S."/>
            <person name="Maezato Y."/>
            <person name="Blum P.H."/>
            <person name="Kelly R.M."/>
        </authorList>
    </citation>
    <scope>NUCLEOTIDE SEQUENCE [LARGE SCALE GENOMIC DNA]</scope>
    <source>
        <strain>ATCC 51363 / DSM 5348 / JCM 9185 / NBRC 15509 / TH2</strain>
    </source>
</reference>
<accession>A4YHE2</accession>
<proteinExistence type="inferred from homology"/>
<sequence length="343" mass="37229">MDPKEVLKRLTEGVSLSQEEAKELADLIMEGSIPEPLVAGILVALKMKGETPDEIIGFVNSMRQHALKLDLRNTLDTAGTGGDGIGTINVSTATALAVSSVFPVAKHGNRAASSRSGSADFLESLGYNIQVPPEKAKDLLSRNNFVFLFAQLYHPSMKNVAPVRKVLGVRTIFNLLGPLTNPAGSERQVMGVYSLPFMRKLAEAALKLGYVKLVLVHGEPGLDEVSPQGKTYITEVTGSKVEEYTYDFSEIIGQPVPVSRLTTTDPLDSVRRVLMASMGRDEAVEKFIRINVSVALYTAGLVSDFKDGFELSEELVRKLPDRIETLVRDNGDPSKIKAIKGSL</sequence>
<keyword id="KW-0028">Amino-acid biosynthesis</keyword>
<keyword id="KW-0057">Aromatic amino acid biosynthesis</keyword>
<keyword id="KW-0328">Glycosyltransferase</keyword>
<keyword id="KW-0460">Magnesium</keyword>
<keyword id="KW-0479">Metal-binding</keyword>
<keyword id="KW-1185">Reference proteome</keyword>
<keyword id="KW-0808">Transferase</keyword>
<keyword id="KW-0822">Tryptophan biosynthesis</keyword>
<protein>
    <recommendedName>
        <fullName evidence="1">Anthranilate phosphoribosyltransferase</fullName>
        <ecNumber evidence="1">2.4.2.18</ecNumber>
    </recommendedName>
</protein>